<gene>
    <name evidence="10" type="primary">ALT8</name>
</gene>
<name>ALT8_ALTAL</name>
<sequence>MATLACVGAAAMACALAVYLGDTTKSMSYLSYSGTILFGCSGLWYVWKGLLWPAYFSPLRHLKTVPKSGWLSAETLRLYTEPRGVPQCEWINKLDSVPQGLVRYRSILGFERLLVVSPEALADVLVNRSYEFQKPAFVVTQLEQILGRGVLLAEGNEHRAQRRVLLPAFAFRHVKSLYPVMWSVAEHLITSMTENIRVESSASPTEPVFSSDEPQAKHKHEMITVNIADLCSRATLDIIGIAGIGQEFGAIRNPNNALHQTYCEIFQPSKEATLLGVLRLLLPIWFVDWLPSRRNARVQRAVQTIRSLCRQIIQEERLPQAVDESHSEVASTGKNILTLAIASGAFTDEALVDQIMTFLAAGHETTATALTWAIYIMCLHPGIQEKLRNEVRSRLPKLPSTYNSAPQNLAKTIDTGMPYLNAVCQEVFRYFPPIPVTFREATKNTFILNTAVPAGTKIVLAPRVTNRQSTLWGSNAQEFDPDRWLCLKKQDASIDDSSAASPSFGGSGKRKSQYTDTHKEPSTRSNFATMTFLHGPRSCIGQSFAKAELAILLAALVGRFEFKLARGTPEKEIDVRVSRGATARPEKGLFVQIRVIEGW</sequence>
<proteinExistence type="inferred from homology"/>
<keyword id="KW-0325">Glycoprotein</keyword>
<keyword id="KW-0349">Heme</keyword>
<keyword id="KW-0408">Iron</keyword>
<keyword id="KW-0472">Membrane</keyword>
<keyword id="KW-0479">Metal-binding</keyword>
<keyword id="KW-0503">Monooxygenase</keyword>
<keyword id="KW-0560">Oxidoreductase</keyword>
<keyword id="KW-0812">Transmembrane</keyword>
<keyword id="KW-1133">Transmembrane helix</keyword>
<accession>A0A3G9HB50</accession>
<dbReference type="EC" id="1.-.-.-" evidence="2"/>
<dbReference type="EMBL" id="AB969680">
    <property type="protein sequence ID" value="BBG74272.1"/>
    <property type="molecule type" value="Genomic_DNA"/>
</dbReference>
<dbReference type="SMR" id="A0A3G9HB50"/>
<dbReference type="GlyCosmos" id="A0A3G9HB50">
    <property type="glycosylation" value="1 site, No reported glycans"/>
</dbReference>
<dbReference type="VEuPathDB" id="FungiDB:CC77DRAFT_950329"/>
<dbReference type="GO" id="GO:0016020">
    <property type="term" value="C:membrane"/>
    <property type="evidence" value="ECO:0007669"/>
    <property type="project" value="UniProtKB-SubCell"/>
</dbReference>
<dbReference type="GO" id="GO:0020037">
    <property type="term" value="F:heme binding"/>
    <property type="evidence" value="ECO:0007669"/>
    <property type="project" value="InterPro"/>
</dbReference>
<dbReference type="GO" id="GO:0005506">
    <property type="term" value="F:iron ion binding"/>
    <property type="evidence" value="ECO:0007669"/>
    <property type="project" value="InterPro"/>
</dbReference>
<dbReference type="GO" id="GO:0004497">
    <property type="term" value="F:monooxygenase activity"/>
    <property type="evidence" value="ECO:0007669"/>
    <property type="project" value="UniProtKB-KW"/>
</dbReference>
<dbReference type="GO" id="GO:0016705">
    <property type="term" value="F:oxidoreductase activity, acting on paired donors, with incorporation or reduction of molecular oxygen"/>
    <property type="evidence" value="ECO:0007669"/>
    <property type="project" value="InterPro"/>
</dbReference>
<dbReference type="CDD" id="cd11069">
    <property type="entry name" value="CYP_FUM15-like"/>
    <property type="match status" value="1"/>
</dbReference>
<dbReference type="Gene3D" id="1.10.630.10">
    <property type="entry name" value="Cytochrome P450"/>
    <property type="match status" value="1"/>
</dbReference>
<dbReference type="InterPro" id="IPR001128">
    <property type="entry name" value="Cyt_P450"/>
</dbReference>
<dbReference type="InterPro" id="IPR002401">
    <property type="entry name" value="Cyt_P450_E_grp-I"/>
</dbReference>
<dbReference type="InterPro" id="IPR036396">
    <property type="entry name" value="Cyt_P450_sf"/>
</dbReference>
<dbReference type="InterPro" id="IPR050121">
    <property type="entry name" value="Cytochrome_P450_monoxygenase"/>
</dbReference>
<dbReference type="PANTHER" id="PTHR24305">
    <property type="entry name" value="CYTOCHROME P450"/>
    <property type="match status" value="1"/>
</dbReference>
<dbReference type="PANTHER" id="PTHR24305:SF227">
    <property type="entry name" value="P450, PUTATIVE (EUROFUNG)-RELATED"/>
    <property type="match status" value="1"/>
</dbReference>
<dbReference type="Pfam" id="PF00067">
    <property type="entry name" value="p450"/>
    <property type="match status" value="1"/>
</dbReference>
<dbReference type="PRINTS" id="PR00463">
    <property type="entry name" value="EP450I"/>
</dbReference>
<dbReference type="PRINTS" id="PR00385">
    <property type="entry name" value="P450"/>
</dbReference>
<dbReference type="SUPFAM" id="SSF48264">
    <property type="entry name" value="Cytochrome P450"/>
    <property type="match status" value="1"/>
</dbReference>
<protein>
    <recommendedName>
        <fullName evidence="2">Cytochrome P450 monooxygenase ALT8</fullName>
        <ecNumber evidence="2">1.-.-.-</ecNumber>
    </recommendedName>
    <alternativeName>
        <fullName evidence="10">AAL-toxin biosynthesis cluster protein 8</fullName>
    </alternativeName>
</protein>
<feature type="chain" id="PRO_0000449851" description="Cytochrome P450 monooxygenase ALT8">
    <location>
        <begin position="1"/>
        <end position="599"/>
    </location>
</feature>
<feature type="transmembrane region" description="Helical" evidence="3">
    <location>
        <begin position="4"/>
        <end position="21"/>
    </location>
</feature>
<feature type="transmembrane region" description="Helical" evidence="3">
    <location>
        <begin position="36"/>
        <end position="56"/>
    </location>
</feature>
<feature type="region of interest" description="Disordered" evidence="5">
    <location>
        <begin position="495"/>
        <end position="522"/>
    </location>
</feature>
<feature type="compositionally biased region" description="Low complexity" evidence="5">
    <location>
        <begin position="495"/>
        <end position="504"/>
    </location>
</feature>
<feature type="binding site" description="axial binding residue" evidence="1">
    <location>
        <position position="539"/>
    </location>
    <ligand>
        <name>heme</name>
        <dbReference type="ChEBI" id="CHEBI:30413"/>
    </ligand>
    <ligandPart>
        <name>Fe</name>
        <dbReference type="ChEBI" id="CHEBI:18248"/>
    </ligandPart>
</feature>
<feature type="glycosylation site" description="N-linked (GlcNAc...) asparagine" evidence="4">
    <location>
        <position position="127"/>
    </location>
</feature>
<organism>
    <name type="scientific">Alternaria alternata</name>
    <name type="common">Alternaria rot fungus</name>
    <name type="synonym">Torula alternata</name>
    <dbReference type="NCBI Taxonomy" id="5599"/>
    <lineage>
        <taxon>Eukaryota</taxon>
        <taxon>Fungi</taxon>
        <taxon>Dikarya</taxon>
        <taxon>Ascomycota</taxon>
        <taxon>Pezizomycotina</taxon>
        <taxon>Dothideomycetes</taxon>
        <taxon>Pleosporomycetidae</taxon>
        <taxon>Pleosporales</taxon>
        <taxon>Pleosporineae</taxon>
        <taxon>Pleosporaceae</taxon>
        <taxon>Alternaria</taxon>
        <taxon>Alternaria sect. Alternaria</taxon>
        <taxon>Alternaria alternata complex</taxon>
    </lineage>
</organism>
<reference key="1">
    <citation type="submission" date="2014-06" db="EMBL/GenBank/DDBJ databases">
        <title>AAL-toxin biosynthetic genes cluster in the tomato pathotype of Alternaria alternata.</title>
        <authorList>
            <person name="Akagi Y."/>
            <person name="Akamatsu H."/>
            <person name="Takao K."/>
            <person name="Tsuge T."/>
            <person name="Kodama M."/>
        </authorList>
    </citation>
    <scope>NUCLEOTIDE SEQUENCE [GENOMIC DNA]</scope>
    <source>
        <strain>As-27</strain>
    </source>
</reference>
<reference key="2">
    <citation type="journal article" date="2008" name="J. Nat. Prod.">
        <title>Functional complementation of fumonisin biosynthesis in FUM1-disrupted fusarium verticillioides by the AAL-toxin polyketide synthase gene ALT1 from Alternaria alternata f. sp. Lycopersici.</title>
        <authorList>
            <person name="Zhu X."/>
            <person name="Vogeler C."/>
            <person name="Du L."/>
        </authorList>
    </citation>
    <scope>FUNCTION</scope>
</reference>
<reference key="3">
    <citation type="journal article" date="2009" name="Eukaryot. Cell">
        <title>Horizontal chromosome transfer, a mechanism for the evolution and differentiation of a plant-pathogenic fungus.</title>
        <authorList>
            <person name="Akagi Y."/>
            <person name="Akamatsu H."/>
            <person name="Otani H."/>
            <person name="Kodama M."/>
        </authorList>
    </citation>
    <scope>FUNCTION</scope>
</reference>
<reference key="4">
    <citation type="journal article" date="2009" name="J. Nat. Prod.">
        <title>Introduction of the AAL-toxin polyketide synthase gene ALT1 into FUM1-disrupted Fusarium verticillioides produces metabolites with the fumonisin methylation pattern.</title>
        <authorList>
            <person name="Li Y."/>
            <person name="Shen Y."/>
            <person name="Zhu X."/>
            <person name="Du L."/>
        </authorList>
    </citation>
    <scope>FUNCTION</scope>
</reference>
<reference key="5">
    <citation type="journal article" date="2012" name="J. Plant Pathol. Microbiol.">
        <title>Functional analysis of the ceramide synthase gene ALT7, a homolog of the disease resistance gene Asc1, in the plant pathogen Alternaria alternata.</title>
        <authorList>
            <person name="Kheder A.A."/>
            <person name="Akagi Y."/>
            <person name="Tsuge T."/>
            <person name="Kodama M."/>
        </authorList>
    </citation>
    <scope>FUNCTION</scope>
</reference>
<evidence type="ECO:0000250" key="1">
    <source>
        <dbReference type="UniProtKB" id="P04798"/>
    </source>
</evidence>
<evidence type="ECO:0000250" key="2">
    <source>
        <dbReference type="UniProtKB" id="W7LC91"/>
    </source>
</evidence>
<evidence type="ECO:0000255" key="3"/>
<evidence type="ECO:0000255" key="4">
    <source>
        <dbReference type="PROSITE-ProRule" id="PRU00498"/>
    </source>
</evidence>
<evidence type="ECO:0000256" key="5">
    <source>
        <dbReference type="SAM" id="MobiDB-lite"/>
    </source>
</evidence>
<evidence type="ECO:0000269" key="6">
    <source>
    </source>
</evidence>
<evidence type="ECO:0000269" key="7">
    <source>
    </source>
</evidence>
<evidence type="ECO:0000269" key="8">
    <source>
    </source>
</evidence>
<evidence type="ECO:0000269" key="9">
    <source ref="5"/>
</evidence>
<evidence type="ECO:0000303" key="10">
    <source ref="1"/>
</evidence>
<evidence type="ECO:0000305" key="11"/>
<evidence type="ECO:0000305" key="12">
    <source>
    </source>
</evidence>
<comment type="function">
    <text evidence="6 7 8 9 12">Cytochrome P450 monooxygenase; part of the gene cluster that mediates the biosynthesis of the host-selective toxins (HSTs) AAL-toxins, sphinganine-analog mycotoxins responsible for Alternaria stem canker on tomato by the tomato pathotype (PubMed:18435561, PubMed:19449880, PubMed:19749175). The biosynthesis starts with the polyketide synthase ALT1-catalyzed C-16 carbon chain assembly from one starter acetyl-CoA unit with malonyl-CoA extender units (PubMed:18435561, PubMed:19449880). ALT1 also selectively transfers methyl groups at the first and the third cycle of chain elongation for AAL toxin (PubMed:19449880). The C-16 polyketide chain is released from the enzyme by a nucleophilic attack of a carbanion, which is derived from R-carbon of glycin by decarboxylation, on the carbonyl carbon of polyketide acyl chain (Probable). This step is probably catalyzed by a pyridoxal 5'-phosphate-dependent aminoacyl transferase ALT4 (Probable). The respective functions of the other enzymes encoded by the cluster have still to be elucidated (Probable). The sphingosine N-acyltransferase-like protein ALT7 seems not to act as a resistance/self-tolerance factor against the toxin in the toxin biosynthetic gene cluster, contrary to what is expected (Ref.5).</text>
</comment>
<comment type="cofactor">
    <cofactor evidence="1">
        <name>heme</name>
        <dbReference type="ChEBI" id="CHEBI:30413"/>
    </cofactor>
</comment>
<comment type="pathway">
    <text evidence="2">Secondary metabolite biosynthesis.</text>
</comment>
<comment type="subcellular location">
    <subcellularLocation>
        <location evidence="3">Membrane</location>
        <topology evidence="3">Multi-pass membrane protein</topology>
    </subcellularLocation>
</comment>
<comment type="miscellaneous">
    <text evidence="8">Gene clusters encoding host-selective toxins (HSTs) are localized on conditionally dispensable chromosomes (CDCs), also called supernumerary chromosomes, where they are present in multiple copies. The CDCs are not essential for saprophytic growth but controls host-selective pathogenicity.</text>
</comment>
<comment type="similarity">
    <text evidence="11">Belongs to the cytochrome P450 family.</text>
</comment>